<evidence type="ECO:0000255" key="1">
    <source>
        <dbReference type="HAMAP-Rule" id="MF_00144"/>
    </source>
</evidence>
<reference key="1">
    <citation type="journal article" date="2013" name="Plant Physiol.">
        <title>A Nostoc punctiforme Sugar Transporter Necessary to Establish a Cyanobacterium-Plant Symbiosis.</title>
        <authorList>
            <person name="Ekman M."/>
            <person name="Picossi S."/>
            <person name="Campbell E.L."/>
            <person name="Meeks J.C."/>
            <person name="Flores E."/>
        </authorList>
    </citation>
    <scope>NUCLEOTIDE SEQUENCE [LARGE SCALE GENOMIC DNA]</scope>
    <source>
        <strain>ATCC 29133 / PCC 73102</strain>
    </source>
</reference>
<gene>
    <name evidence="1" type="primary">mnmA</name>
    <name type="ordered locus">Npun_F5444</name>
</gene>
<feature type="chain" id="PRO_0000349723" description="tRNA-specific 2-thiouridylase MnmA">
    <location>
        <begin position="1"/>
        <end position="351"/>
    </location>
</feature>
<feature type="region of interest" description="Interaction with tRNA" evidence="1">
    <location>
        <begin position="143"/>
        <end position="145"/>
    </location>
</feature>
<feature type="region of interest" description="Interaction with tRNA" evidence="1">
    <location>
        <begin position="298"/>
        <end position="299"/>
    </location>
</feature>
<feature type="active site" description="Nucleophile" evidence="1">
    <location>
        <position position="94"/>
    </location>
</feature>
<feature type="active site" description="Cysteine persulfide intermediate" evidence="1">
    <location>
        <position position="193"/>
    </location>
</feature>
<feature type="binding site" evidence="1">
    <location>
        <begin position="7"/>
        <end position="14"/>
    </location>
    <ligand>
        <name>ATP</name>
        <dbReference type="ChEBI" id="CHEBI:30616"/>
    </ligand>
</feature>
<feature type="binding site" evidence="1">
    <location>
        <position position="33"/>
    </location>
    <ligand>
        <name>ATP</name>
        <dbReference type="ChEBI" id="CHEBI:30616"/>
    </ligand>
</feature>
<feature type="binding site" evidence="1">
    <location>
        <position position="119"/>
    </location>
    <ligand>
        <name>ATP</name>
        <dbReference type="ChEBI" id="CHEBI:30616"/>
    </ligand>
</feature>
<feature type="site" description="Interaction with tRNA" evidence="1">
    <location>
        <position position="120"/>
    </location>
</feature>
<feature type="site" description="Interaction with tRNA" evidence="1">
    <location>
        <position position="331"/>
    </location>
</feature>
<feature type="disulfide bond" description="Alternate" evidence="1">
    <location>
        <begin position="94"/>
        <end position="193"/>
    </location>
</feature>
<organism>
    <name type="scientific">Nostoc punctiforme (strain ATCC 29133 / PCC 73102)</name>
    <dbReference type="NCBI Taxonomy" id="63737"/>
    <lineage>
        <taxon>Bacteria</taxon>
        <taxon>Bacillati</taxon>
        <taxon>Cyanobacteriota</taxon>
        <taxon>Cyanophyceae</taxon>
        <taxon>Nostocales</taxon>
        <taxon>Nostocaceae</taxon>
        <taxon>Nostoc</taxon>
    </lineage>
</organism>
<protein>
    <recommendedName>
        <fullName evidence="1">tRNA-specific 2-thiouridylase MnmA</fullName>
        <ecNumber evidence="1">2.8.1.13</ecNumber>
    </recommendedName>
</protein>
<keyword id="KW-0067">ATP-binding</keyword>
<keyword id="KW-0963">Cytoplasm</keyword>
<keyword id="KW-1015">Disulfide bond</keyword>
<keyword id="KW-0547">Nucleotide-binding</keyword>
<keyword id="KW-1185">Reference proteome</keyword>
<keyword id="KW-0694">RNA-binding</keyword>
<keyword id="KW-0808">Transferase</keyword>
<keyword id="KW-0819">tRNA processing</keyword>
<keyword id="KW-0820">tRNA-binding</keyword>
<comment type="function">
    <text evidence="1">Catalyzes the 2-thiolation of uridine at the wobble position (U34) of tRNA, leading to the formation of s(2)U34.</text>
</comment>
<comment type="catalytic activity">
    <reaction evidence="1">
        <text>S-sulfanyl-L-cysteinyl-[protein] + uridine(34) in tRNA + AH2 + ATP = 2-thiouridine(34) in tRNA + L-cysteinyl-[protein] + A + AMP + diphosphate + H(+)</text>
        <dbReference type="Rhea" id="RHEA:47032"/>
        <dbReference type="Rhea" id="RHEA-COMP:10131"/>
        <dbReference type="Rhea" id="RHEA-COMP:11726"/>
        <dbReference type="Rhea" id="RHEA-COMP:11727"/>
        <dbReference type="Rhea" id="RHEA-COMP:11728"/>
        <dbReference type="ChEBI" id="CHEBI:13193"/>
        <dbReference type="ChEBI" id="CHEBI:15378"/>
        <dbReference type="ChEBI" id="CHEBI:17499"/>
        <dbReference type="ChEBI" id="CHEBI:29950"/>
        <dbReference type="ChEBI" id="CHEBI:30616"/>
        <dbReference type="ChEBI" id="CHEBI:33019"/>
        <dbReference type="ChEBI" id="CHEBI:61963"/>
        <dbReference type="ChEBI" id="CHEBI:65315"/>
        <dbReference type="ChEBI" id="CHEBI:87170"/>
        <dbReference type="ChEBI" id="CHEBI:456215"/>
        <dbReference type="EC" id="2.8.1.13"/>
    </reaction>
</comment>
<comment type="subcellular location">
    <subcellularLocation>
        <location evidence="1">Cytoplasm</location>
    </subcellularLocation>
</comment>
<comment type="similarity">
    <text evidence="1">Belongs to the MnmA/TRMU family.</text>
</comment>
<sequence length="351" mass="38608">MKKVVVGLSGGVDSSTAAAILHHQGYEVIGLTLWLMKGKGQCCSEGMIDAADLCEQLGVPHQIVDIRDLFQTHIVDYLVTGYSAGITPLPCSQCNKTVKFGPMVQYAREELGCDRIATGHYARISYDEATGRYQLLRAIDRNKDQSYFLYDLSQDLLAATIFPLGELEKTDTRRIATEYGLKTADKPESQDLCLVESNGSMRAFLDKYLAPKSGDIVDTTGKILGQHDGVHHYTIGQRKGLGIAAAEPLYVIELDAENNKVVVGDRTKVTQPECTVNRVNWVSIAEPSTPIHAEVQIRYRSTPTPVTVIPLENSRVRLVFDEPQFSITPGQAAVWYDGEKVLGGGIIEQFS</sequence>
<name>MNMA_NOSP7</name>
<dbReference type="EC" id="2.8.1.13" evidence="1"/>
<dbReference type="EMBL" id="CP001037">
    <property type="protein sequence ID" value="ACC83751.1"/>
    <property type="molecule type" value="Genomic_DNA"/>
</dbReference>
<dbReference type="RefSeq" id="WP_012411697.1">
    <property type="nucleotide sequence ID" value="NC_010628.1"/>
</dbReference>
<dbReference type="SMR" id="B2J5L9"/>
<dbReference type="STRING" id="63737.Npun_F5444"/>
<dbReference type="EnsemblBacteria" id="ACC83751">
    <property type="protein sequence ID" value="ACC83751"/>
    <property type="gene ID" value="Npun_F5444"/>
</dbReference>
<dbReference type="KEGG" id="npu:Npun_F5444"/>
<dbReference type="eggNOG" id="COG0482">
    <property type="taxonomic scope" value="Bacteria"/>
</dbReference>
<dbReference type="HOGENOM" id="CLU_035188_0_0_3"/>
<dbReference type="OrthoDB" id="9800696at2"/>
<dbReference type="PhylomeDB" id="B2J5L9"/>
<dbReference type="Proteomes" id="UP000001191">
    <property type="component" value="Chromosome"/>
</dbReference>
<dbReference type="GO" id="GO:0005737">
    <property type="term" value="C:cytoplasm"/>
    <property type="evidence" value="ECO:0007669"/>
    <property type="project" value="UniProtKB-SubCell"/>
</dbReference>
<dbReference type="GO" id="GO:0005524">
    <property type="term" value="F:ATP binding"/>
    <property type="evidence" value="ECO:0007669"/>
    <property type="project" value="UniProtKB-KW"/>
</dbReference>
<dbReference type="GO" id="GO:0000049">
    <property type="term" value="F:tRNA binding"/>
    <property type="evidence" value="ECO:0007669"/>
    <property type="project" value="UniProtKB-KW"/>
</dbReference>
<dbReference type="GO" id="GO:0103016">
    <property type="term" value="F:tRNA-uridine 2-sulfurtransferase activity"/>
    <property type="evidence" value="ECO:0007669"/>
    <property type="project" value="UniProtKB-EC"/>
</dbReference>
<dbReference type="GO" id="GO:0002143">
    <property type="term" value="P:tRNA wobble position uridine thiolation"/>
    <property type="evidence" value="ECO:0007669"/>
    <property type="project" value="TreeGrafter"/>
</dbReference>
<dbReference type="CDD" id="cd01998">
    <property type="entry name" value="MnmA_TRMU-like"/>
    <property type="match status" value="1"/>
</dbReference>
<dbReference type="FunFam" id="2.30.30.280:FF:000001">
    <property type="entry name" value="tRNA-specific 2-thiouridylase MnmA"/>
    <property type="match status" value="1"/>
</dbReference>
<dbReference type="FunFam" id="2.40.30.10:FF:000023">
    <property type="entry name" value="tRNA-specific 2-thiouridylase MnmA"/>
    <property type="match status" value="1"/>
</dbReference>
<dbReference type="FunFam" id="3.40.50.620:FF:000302">
    <property type="entry name" value="tRNA-specific 2-thiouridylase MnmA"/>
    <property type="match status" value="1"/>
</dbReference>
<dbReference type="Gene3D" id="2.30.30.280">
    <property type="entry name" value="Adenine nucleotide alpha hydrolases-like domains"/>
    <property type="match status" value="1"/>
</dbReference>
<dbReference type="Gene3D" id="3.40.50.620">
    <property type="entry name" value="HUPs"/>
    <property type="match status" value="1"/>
</dbReference>
<dbReference type="Gene3D" id="2.40.30.10">
    <property type="entry name" value="Translation factors"/>
    <property type="match status" value="1"/>
</dbReference>
<dbReference type="HAMAP" id="MF_00144">
    <property type="entry name" value="tRNA_thiouridyl_MnmA"/>
    <property type="match status" value="1"/>
</dbReference>
<dbReference type="InterPro" id="IPR004506">
    <property type="entry name" value="MnmA-like"/>
</dbReference>
<dbReference type="InterPro" id="IPR046885">
    <property type="entry name" value="MnmA-like_C"/>
</dbReference>
<dbReference type="InterPro" id="IPR046884">
    <property type="entry name" value="MnmA-like_central"/>
</dbReference>
<dbReference type="InterPro" id="IPR023382">
    <property type="entry name" value="MnmA-like_central_sf"/>
</dbReference>
<dbReference type="InterPro" id="IPR014729">
    <property type="entry name" value="Rossmann-like_a/b/a_fold"/>
</dbReference>
<dbReference type="NCBIfam" id="NF001138">
    <property type="entry name" value="PRK00143.1"/>
    <property type="match status" value="1"/>
</dbReference>
<dbReference type="NCBIfam" id="TIGR00420">
    <property type="entry name" value="trmU"/>
    <property type="match status" value="1"/>
</dbReference>
<dbReference type="PANTHER" id="PTHR11933:SF5">
    <property type="entry name" value="MITOCHONDRIAL TRNA-SPECIFIC 2-THIOURIDYLASE 1"/>
    <property type="match status" value="1"/>
</dbReference>
<dbReference type="PANTHER" id="PTHR11933">
    <property type="entry name" value="TRNA 5-METHYLAMINOMETHYL-2-THIOURIDYLATE -METHYLTRANSFERASE"/>
    <property type="match status" value="1"/>
</dbReference>
<dbReference type="Pfam" id="PF03054">
    <property type="entry name" value="tRNA_Me_trans"/>
    <property type="match status" value="1"/>
</dbReference>
<dbReference type="Pfam" id="PF20258">
    <property type="entry name" value="tRNA_Me_trans_C"/>
    <property type="match status" value="1"/>
</dbReference>
<dbReference type="Pfam" id="PF20259">
    <property type="entry name" value="tRNA_Me_trans_M"/>
    <property type="match status" value="1"/>
</dbReference>
<dbReference type="SUPFAM" id="SSF52402">
    <property type="entry name" value="Adenine nucleotide alpha hydrolases-like"/>
    <property type="match status" value="1"/>
</dbReference>
<proteinExistence type="inferred from homology"/>
<accession>B2J5L9</accession>